<accession>A8GSZ8</accession>
<keyword id="KW-0687">Ribonucleoprotein</keyword>
<keyword id="KW-0689">Ribosomal protein</keyword>
<keyword id="KW-0694">RNA-binding</keyword>
<keyword id="KW-0699">rRNA-binding</keyword>
<organism>
    <name type="scientific">Rickettsia rickettsii (strain Sheila Smith)</name>
    <dbReference type="NCBI Taxonomy" id="392021"/>
    <lineage>
        <taxon>Bacteria</taxon>
        <taxon>Pseudomonadati</taxon>
        <taxon>Pseudomonadota</taxon>
        <taxon>Alphaproteobacteria</taxon>
        <taxon>Rickettsiales</taxon>
        <taxon>Rickettsiaceae</taxon>
        <taxon>Rickettsieae</taxon>
        <taxon>Rickettsia</taxon>
        <taxon>spotted fever group</taxon>
    </lineage>
</organism>
<sequence>MTRAKSGKISKNRHKKILKLAKGYRGRANSCFRVAIEKVEKALQYAYRDRRNRKRDFRGLWIQRINAAVREHGLVYSQFMGALKKTEIAIDRKVLAELAVNNSDGFVSIVEKAKAHI</sequence>
<feature type="chain" id="PRO_1000049057" description="Large ribosomal subunit protein bL20">
    <location>
        <begin position="1"/>
        <end position="117"/>
    </location>
</feature>
<protein>
    <recommendedName>
        <fullName evidence="1">Large ribosomal subunit protein bL20</fullName>
    </recommendedName>
    <alternativeName>
        <fullName evidence="2">50S ribosomal protein L20</fullName>
    </alternativeName>
</protein>
<dbReference type="EMBL" id="CP000848">
    <property type="protein sequence ID" value="ABV76523.1"/>
    <property type="molecule type" value="Genomic_DNA"/>
</dbReference>
<dbReference type="RefSeq" id="WP_012151091.1">
    <property type="nucleotide sequence ID" value="NZ_CP121767.1"/>
</dbReference>
<dbReference type="SMR" id="A8GSZ8"/>
<dbReference type="GeneID" id="79937607"/>
<dbReference type="KEGG" id="rri:A1G_05150"/>
<dbReference type="HOGENOM" id="CLU_123265_0_1_5"/>
<dbReference type="Proteomes" id="UP000006832">
    <property type="component" value="Chromosome"/>
</dbReference>
<dbReference type="GO" id="GO:1990904">
    <property type="term" value="C:ribonucleoprotein complex"/>
    <property type="evidence" value="ECO:0007669"/>
    <property type="project" value="UniProtKB-KW"/>
</dbReference>
<dbReference type="GO" id="GO:0005840">
    <property type="term" value="C:ribosome"/>
    <property type="evidence" value="ECO:0007669"/>
    <property type="project" value="UniProtKB-KW"/>
</dbReference>
<dbReference type="GO" id="GO:0019843">
    <property type="term" value="F:rRNA binding"/>
    <property type="evidence" value="ECO:0007669"/>
    <property type="project" value="UniProtKB-UniRule"/>
</dbReference>
<dbReference type="GO" id="GO:0003735">
    <property type="term" value="F:structural constituent of ribosome"/>
    <property type="evidence" value="ECO:0007669"/>
    <property type="project" value="InterPro"/>
</dbReference>
<dbReference type="GO" id="GO:0000027">
    <property type="term" value="P:ribosomal large subunit assembly"/>
    <property type="evidence" value="ECO:0007669"/>
    <property type="project" value="UniProtKB-UniRule"/>
</dbReference>
<dbReference type="GO" id="GO:0006412">
    <property type="term" value="P:translation"/>
    <property type="evidence" value="ECO:0007669"/>
    <property type="project" value="InterPro"/>
</dbReference>
<dbReference type="CDD" id="cd07026">
    <property type="entry name" value="Ribosomal_L20"/>
    <property type="match status" value="1"/>
</dbReference>
<dbReference type="FunFam" id="1.10.1900.20:FF:000001">
    <property type="entry name" value="50S ribosomal protein L20"/>
    <property type="match status" value="1"/>
</dbReference>
<dbReference type="Gene3D" id="6.10.160.10">
    <property type="match status" value="1"/>
</dbReference>
<dbReference type="Gene3D" id="1.10.1900.20">
    <property type="entry name" value="Ribosomal protein L20"/>
    <property type="match status" value="1"/>
</dbReference>
<dbReference type="HAMAP" id="MF_00382">
    <property type="entry name" value="Ribosomal_bL20"/>
    <property type="match status" value="1"/>
</dbReference>
<dbReference type="InterPro" id="IPR005813">
    <property type="entry name" value="Ribosomal_bL20"/>
</dbReference>
<dbReference type="InterPro" id="IPR049946">
    <property type="entry name" value="RIBOSOMAL_L20_CS"/>
</dbReference>
<dbReference type="InterPro" id="IPR035566">
    <property type="entry name" value="Ribosomal_protein_bL20_C"/>
</dbReference>
<dbReference type="NCBIfam" id="TIGR01032">
    <property type="entry name" value="rplT_bact"/>
    <property type="match status" value="1"/>
</dbReference>
<dbReference type="PANTHER" id="PTHR10986">
    <property type="entry name" value="39S RIBOSOMAL PROTEIN L20"/>
    <property type="match status" value="1"/>
</dbReference>
<dbReference type="Pfam" id="PF00453">
    <property type="entry name" value="Ribosomal_L20"/>
    <property type="match status" value="1"/>
</dbReference>
<dbReference type="PRINTS" id="PR00062">
    <property type="entry name" value="RIBOSOMALL20"/>
</dbReference>
<dbReference type="SUPFAM" id="SSF74731">
    <property type="entry name" value="Ribosomal protein L20"/>
    <property type="match status" value="1"/>
</dbReference>
<dbReference type="PROSITE" id="PS00937">
    <property type="entry name" value="RIBOSOMAL_L20"/>
    <property type="match status" value="1"/>
</dbReference>
<comment type="function">
    <text evidence="1">Binds directly to 23S ribosomal RNA and is necessary for the in vitro assembly process of the 50S ribosomal subunit. It is not involved in the protein synthesizing functions of that subunit.</text>
</comment>
<comment type="similarity">
    <text evidence="1">Belongs to the bacterial ribosomal protein bL20 family.</text>
</comment>
<reference key="1">
    <citation type="submission" date="2007-09" db="EMBL/GenBank/DDBJ databases">
        <title>Complete genome sequence of Rickettsia rickettsii.</title>
        <authorList>
            <person name="Madan A."/>
            <person name="Fahey J."/>
            <person name="Helton E."/>
            <person name="Ketteman M."/>
            <person name="Madan A."/>
            <person name="Rodrigues S."/>
            <person name="Sanchez A."/>
            <person name="Dasch G."/>
            <person name="Eremeeva M."/>
        </authorList>
    </citation>
    <scope>NUCLEOTIDE SEQUENCE [LARGE SCALE GENOMIC DNA]</scope>
    <source>
        <strain>Sheila Smith</strain>
    </source>
</reference>
<proteinExistence type="inferred from homology"/>
<name>RL20_RICRS</name>
<evidence type="ECO:0000255" key="1">
    <source>
        <dbReference type="HAMAP-Rule" id="MF_00382"/>
    </source>
</evidence>
<evidence type="ECO:0000305" key="2"/>
<gene>
    <name evidence="1" type="primary">rplT</name>
    <name type="ordered locus">A1G_05150</name>
</gene>